<feature type="signal peptide" evidence="2">
    <location>
        <begin position="1"/>
        <end position="30"/>
    </location>
</feature>
<feature type="chain" id="PRO_0000018359" description="Leucine-rich repeat transmembrane neuronal protein 4">
    <location>
        <begin position="31"/>
        <end position="590"/>
    </location>
</feature>
<feature type="topological domain" description="Extracellular" evidence="2">
    <location>
        <begin position="31"/>
        <end position="424"/>
    </location>
</feature>
<feature type="transmembrane region" description="Helical" evidence="2">
    <location>
        <begin position="425"/>
        <end position="445"/>
    </location>
</feature>
<feature type="topological domain" description="Cytoplasmic" evidence="2">
    <location>
        <begin position="446"/>
        <end position="590"/>
    </location>
</feature>
<feature type="domain" description="LRRNT">
    <location>
        <begin position="31"/>
        <end position="61"/>
    </location>
</feature>
<feature type="repeat" description="LRR 1">
    <location>
        <begin position="62"/>
        <end position="83"/>
    </location>
</feature>
<feature type="repeat" description="LRR 2">
    <location>
        <begin position="86"/>
        <end position="107"/>
    </location>
</feature>
<feature type="repeat" description="LRR 3">
    <location>
        <begin position="110"/>
        <end position="131"/>
    </location>
</feature>
<feature type="repeat" description="LRR 4">
    <location>
        <begin position="134"/>
        <end position="155"/>
    </location>
</feature>
<feature type="repeat" description="LRR 5">
    <location>
        <begin position="158"/>
        <end position="179"/>
    </location>
</feature>
<feature type="repeat" description="LRR 6">
    <location>
        <begin position="182"/>
        <end position="203"/>
    </location>
</feature>
<feature type="repeat" description="LRR 7">
    <location>
        <begin position="206"/>
        <end position="226"/>
    </location>
</feature>
<feature type="repeat" description="LRR 8">
    <location>
        <begin position="230"/>
        <end position="251"/>
    </location>
</feature>
<feature type="repeat" description="LRR 9">
    <location>
        <begin position="254"/>
        <end position="275"/>
    </location>
</feature>
<feature type="repeat" description="LRR 10">
    <location>
        <begin position="278"/>
        <end position="299"/>
    </location>
</feature>
<feature type="domain" description="LRRCT">
    <location>
        <begin position="311"/>
        <end position="362"/>
    </location>
</feature>
<feature type="glycosylation site" description="N-linked (GlcNAc...) asparagine" evidence="2">
    <location>
        <position position="58"/>
    </location>
</feature>
<feature type="glycosylation site" description="N-linked (GlcNAc...) asparagine" evidence="2">
    <location>
        <position position="126"/>
    </location>
</feature>
<feature type="glycosylation site" description="N-linked (GlcNAc...) asparagine" evidence="2">
    <location>
        <position position="291"/>
    </location>
</feature>
<feature type="splice variant" id="VSP_014193" description="In isoform 2." evidence="5">
    <original>I</original>
    <variation>V</variation>
    <location>
        <position position="518"/>
    </location>
</feature>
<feature type="splice variant" id="VSP_014194" description="In isoform 2." evidence="5">
    <location>
        <begin position="519"/>
        <end position="590"/>
    </location>
</feature>
<feature type="sequence conflict" description="In Ref. 2." evidence="6" ref="2">
    <original>M</original>
    <variation>MP</variation>
    <location>
        <position position="1"/>
    </location>
</feature>
<proteinExistence type="evidence at protein level"/>
<organism>
    <name type="scientific">Mus musculus</name>
    <name type="common">Mouse</name>
    <dbReference type="NCBI Taxonomy" id="10090"/>
    <lineage>
        <taxon>Eukaryota</taxon>
        <taxon>Metazoa</taxon>
        <taxon>Chordata</taxon>
        <taxon>Craniata</taxon>
        <taxon>Vertebrata</taxon>
        <taxon>Euteleostomi</taxon>
        <taxon>Mammalia</taxon>
        <taxon>Eutheria</taxon>
        <taxon>Euarchontoglires</taxon>
        <taxon>Glires</taxon>
        <taxon>Rodentia</taxon>
        <taxon>Myomorpha</taxon>
        <taxon>Muroidea</taxon>
        <taxon>Muridae</taxon>
        <taxon>Murinae</taxon>
        <taxon>Mus</taxon>
        <taxon>Mus</taxon>
    </lineage>
</organism>
<name>LRRT4_MOUSE</name>
<keyword id="KW-0025">Alternative splicing</keyword>
<keyword id="KW-1003">Cell membrane</keyword>
<keyword id="KW-0325">Glycoprotein</keyword>
<keyword id="KW-0433">Leucine-rich repeat</keyword>
<keyword id="KW-0472">Membrane</keyword>
<keyword id="KW-0628">Postsynaptic cell membrane</keyword>
<keyword id="KW-1185">Reference proteome</keyword>
<keyword id="KW-0677">Repeat</keyword>
<keyword id="KW-0732">Signal</keyword>
<keyword id="KW-0770">Synapse</keyword>
<keyword id="KW-0812">Transmembrane</keyword>
<keyword id="KW-1133">Transmembrane helix</keyword>
<accession>Q80XG9</accession>
<accession>Q8C030</accession>
<accession>Q8JZS8</accession>
<sequence>MGFRLITQLKGMSVFLVLFPTLLLVMLTGAQRACPKNCRCDGKIVYCESHAFADIPENISGGSQGLSLRFNSIQKLKSNQFAGLNQLIWLYLDHNYISSVDEDAFQGIRRLKELILSSNKITYLHNKTFHPVPNLRNLDLSYNKLQTLQSEQFKGLRKLIILHLRSNSLKTVPIRVFQDCRNLDFLDLGYNRLRSLSRNAFAGLLKLKELHLEHNQFSKINFAHFPRLFNLRSIYLQWNRIRSVSQGLTWTWSSLHTLDLSGNDIQAIEPGTFKCLPNLQKLNLDSNKLTNVSQETVNAWISLISITLSGNMWECSRSICPLFYWLKNFKGNKESTMICAGPKHIQGEKVSDAVETYNICSDVQVVNTERSHLAPQTPQKPPFIPKPTIFKPDAVPATLEAVSPSPGFQIPGTDHEYEHVSFHKIIAGSVALFLSVAMILLVIYVSWKRYPASMKQLQQHSLMKRRRKKARESERQMNSPLQEYYVDYKPTNSETMDISVNGSGPCTYTISGSRECEIPHHVKPLPYYSYDQPVIGYCQAHQPLHINKAYEAVSIEQDDSPSLELGRDHSFIATIARSAAPAIYLERITN</sequence>
<comment type="function">
    <text evidence="1">May play a role in the development and maintenance of the vertebrate nervous system. Exhibits strong synaptogenic activity, restricted to excitatory presynaptic differentiation (By similarity).</text>
</comment>
<comment type="subunit">
    <text evidence="4">Peripherally associated with AMPAR complex. AMPAR complex consists of an inner core made of 4 pore-forming GluA/GRIA proteins (GRIA1, GRIA2, GRIA3 and GRIA4) and 4 major auxiliary subunits arranged in a twofold symmetry. One of the two pairs of distinct binding sites is occupied either by CNIH2, CNIH3 or CACNG2, CACNG3. The other harbors CACNG2, CACNG3, CACNG4, CACNG8 or GSG1L. This inner core of AMPAR complex is complemented by outer core constituents binding directly to the GluA/GRIA proteins at sites distinct from the interaction sites of the inner core constituents. Outer core constituents include at least PRRT1, PRRT2, CKAMP44/SHISA9, FRRS1L and NRN1. The proteins of the inner and outer core serve as a platform for other, more peripherally associated AMPAR constituents, including LRRTM4. Alone or in combination, these auxiliary subunits control the gating and pharmacology of the AMPAR complex and profoundly impact their biogenesis and protein processing.</text>
</comment>
<comment type="subcellular location">
    <subcellularLocation>
        <location evidence="1">Cell membrane</location>
        <topology evidence="1">Single-pass type I membrane protein</topology>
    </subcellularLocation>
    <subcellularLocation>
        <location evidence="1">Postsynaptic cell membrane</location>
        <topology evidence="1">Single-pass type I membrane protein</topology>
    </subcellularLocation>
</comment>
<comment type="alternative products">
    <event type="alternative splicing"/>
    <isoform>
        <id>Q80XG9-1</id>
        <name>1</name>
        <sequence type="displayed"/>
    </isoform>
    <isoform>
        <id>Q80XG9-2</id>
        <name>2</name>
        <sequence type="described" ref="VSP_014193 VSP_014194"/>
    </isoform>
</comment>
<comment type="tissue specificity">
    <text evidence="3 4">Predominantly in the brain (at protein level). Also expressed in the cerebellum and other tissues.</text>
</comment>
<comment type="similarity">
    <text evidence="6">Belongs to the LRRTM family.</text>
</comment>
<comment type="sequence caution" evidence="6">
    <conflict type="erroneous initiation">
        <sequence resource="EMBL-CDS" id="BAC27887"/>
    </conflict>
</comment>
<reference key="1">
    <citation type="journal article" date="2003" name="Genomics">
        <title>A novel gene family encoding leucine-rich repeat transmembrane proteins differentially expressed in the nervous system.</title>
        <authorList>
            <person name="Lauren J."/>
            <person name="Airaksinen M.S."/>
            <person name="Saarma M."/>
            <person name="Timmusk T.T."/>
        </authorList>
    </citation>
    <scope>NUCLEOTIDE SEQUENCE [MRNA] (ISOFORM 2)</scope>
    <scope>TISSUE SPECIFICITY</scope>
    <source>
        <strain>C57BL/6J</strain>
    </source>
</reference>
<reference key="2">
    <citation type="journal article" date="2004" name="Genome Res.">
        <title>The status, quality, and expansion of the NIH full-length cDNA project: the Mammalian Gene Collection (MGC).</title>
        <authorList>
            <consortium name="The MGC Project Team"/>
        </authorList>
    </citation>
    <scope>NUCLEOTIDE SEQUENCE [LARGE SCALE MRNA] (ISOFORM 1)</scope>
    <source>
        <tissue>Eye</tissue>
    </source>
</reference>
<reference key="3">
    <citation type="journal article" date="2005" name="Science">
        <title>The transcriptional landscape of the mammalian genome.</title>
        <authorList>
            <person name="Carninci P."/>
            <person name="Kasukawa T."/>
            <person name="Katayama S."/>
            <person name="Gough J."/>
            <person name="Frith M.C."/>
            <person name="Maeda N."/>
            <person name="Oyama R."/>
            <person name="Ravasi T."/>
            <person name="Lenhard B."/>
            <person name="Wells C."/>
            <person name="Kodzius R."/>
            <person name="Shimokawa K."/>
            <person name="Bajic V.B."/>
            <person name="Brenner S.E."/>
            <person name="Batalov S."/>
            <person name="Forrest A.R."/>
            <person name="Zavolan M."/>
            <person name="Davis M.J."/>
            <person name="Wilming L.G."/>
            <person name="Aidinis V."/>
            <person name="Allen J.E."/>
            <person name="Ambesi-Impiombato A."/>
            <person name="Apweiler R."/>
            <person name="Aturaliya R.N."/>
            <person name="Bailey T.L."/>
            <person name="Bansal M."/>
            <person name="Baxter L."/>
            <person name="Beisel K.W."/>
            <person name="Bersano T."/>
            <person name="Bono H."/>
            <person name="Chalk A.M."/>
            <person name="Chiu K.P."/>
            <person name="Choudhary V."/>
            <person name="Christoffels A."/>
            <person name="Clutterbuck D.R."/>
            <person name="Crowe M.L."/>
            <person name="Dalla E."/>
            <person name="Dalrymple B.P."/>
            <person name="de Bono B."/>
            <person name="Della Gatta G."/>
            <person name="di Bernardo D."/>
            <person name="Down T."/>
            <person name="Engstrom P."/>
            <person name="Fagiolini M."/>
            <person name="Faulkner G."/>
            <person name="Fletcher C.F."/>
            <person name="Fukushima T."/>
            <person name="Furuno M."/>
            <person name="Futaki S."/>
            <person name="Gariboldi M."/>
            <person name="Georgii-Hemming P."/>
            <person name="Gingeras T.R."/>
            <person name="Gojobori T."/>
            <person name="Green R.E."/>
            <person name="Gustincich S."/>
            <person name="Harbers M."/>
            <person name="Hayashi Y."/>
            <person name="Hensch T.K."/>
            <person name="Hirokawa N."/>
            <person name="Hill D."/>
            <person name="Huminiecki L."/>
            <person name="Iacono M."/>
            <person name="Ikeo K."/>
            <person name="Iwama A."/>
            <person name="Ishikawa T."/>
            <person name="Jakt M."/>
            <person name="Kanapin A."/>
            <person name="Katoh M."/>
            <person name="Kawasawa Y."/>
            <person name="Kelso J."/>
            <person name="Kitamura H."/>
            <person name="Kitano H."/>
            <person name="Kollias G."/>
            <person name="Krishnan S.P."/>
            <person name="Kruger A."/>
            <person name="Kummerfeld S.K."/>
            <person name="Kurochkin I.V."/>
            <person name="Lareau L.F."/>
            <person name="Lazarevic D."/>
            <person name="Lipovich L."/>
            <person name="Liu J."/>
            <person name="Liuni S."/>
            <person name="McWilliam S."/>
            <person name="Madan Babu M."/>
            <person name="Madera M."/>
            <person name="Marchionni L."/>
            <person name="Matsuda H."/>
            <person name="Matsuzawa S."/>
            <person name="Miki H."/>
            <person name="Mignone F."/>
            <person name="Miyake S."/>
            <person name="Morris K."/>
            <person name="Mottagui-Tabar S."/>
            <person name="Mulder N."/>
            <person name="Nakano N."/>
            <person name="Nakauchi H."/>
            <person name="Ng P."/>
            <person name="Nilsson R."/>
            <person name="Nishiguchi S."/>
            <person name="Nishikawa S."/>
            <person name="Nori F."/>
            <person name="Ohara O."/>
            <person name="Okazaki Y."/>
            <person name="Orlando V."/>
            <person name="Pang K.C."/>
            <person name="Pavan W.J."/>
            <person name="Pavesi G."/>
            <person name="Pesole G."/>
            <person name="Petrovsky N."/>
            <person name="Piazza S."/>
            <person name="Reed J."/>
            <person name="Reid J.F."/>
            <person name="Ring B.Z."/>
            <person name="Ringwald M."/>
            <person name="Rost B."/>
            <person name="Ruan Y."/>
            <person name="Salzberg S.L."/>
            <person name="Sandelin A."/>
            <person name="Schneider C."/>
            <person name="Schoenbach C."/>
            <person name="Sekiguchi K."/>
            <person name="Semple C.A."/>
            <person name="Seno S."/>
            <person name="Sessa L."/>
            <person name="Sheng Y."/>
            <person name="Shibata Y."/>
            <person name="Shimada H."/>
            <person name="Shimada K."/>
            <person name="Silva D."/>
            <person name="Sinclair B."/>
            <person name="Sperling S."/>
            <person name="Stupka E."/>
            <person name="Sugiura K."/>
            <person name="Sultana R."/>
            <person name="Takenaka Y."/>
            <person name="Taki K."/>
            <person name="Tammoja K."/>
            <person name="Tan S.L."/>
            <person name="Tang S."/>
            <person name="Taylor M.S."/>
            <person name="Tegner J."/>
            <person name="Teichmann S.A."/>
            <person name="Ueda H.R."/>
            <person name="van Nimwegen E."/>
            <person name="Verardo R."/>
            <person name="Wei C.L."/>
            <person name="Yagi K."/>
            <person name="Yamanishi H."/>
            <person name="Zabarovsky E."/>
            <person name="Zhu S."/>
            <person name="Zimmer A."/>
            <person name="Hide W."/>
            <person name="Bult C."/>
            <person name="Grimmond S.M."/>
            <person name="Teasdale R.D."/>
            <person name="Liu E.T."/>
            <person name="Brusic V."/>
            <person name="Quackenbush J."/>
            <person name="Wahlestedt C."/>
            <person name="Mattick J.S."/>
            <person name="Hume D.A."/>
            <person name="Kai C."/>
            <person name="Sasaki D."/>
            <person name="Tomaru Y."/>
            <person name="Fukuda S."/>
            <person name="Kanamori-Katayama M."/>
            <person name="Suzuki M."/>
            <person name="Aoki J."/>
            <person name="Arakawa T."/>
            <person name="Iida J."/>
            <person name="Imamura K."/>
            <person name="Itoh M."/>
            <person name="Kato T."/>
            <person name="Kawaji H."/>
            <person name="Kawagashira N."/>
            <person name="Kawashima T."/>
            <person name="Kojima M."/>
            <person name="Kondo S."/>
            <person name="Konno H."/>
            <person name="Nakano K."/>
            <person name="Ninomiya N."/>
            <person name="Nishio T."/>
            <person name="Okada M."/>
            <person name="Plessy C."/>
            <person name="Shibata K."/>
            <person name="Shiraki T."/>
            <person name="Suzuki S."/>
            <person name="Tagami M."/>
            <person name="Waki K."/>
            <person name="Watahiki A."/>
            <person name="Okamura-Oho Y."/>
            <person name="Suzuki H."/>
            <person name="Kawai J."/>
            <person name="Hayashizaki Y."/>
        </authorList>
    </citation>
    <scope>NUCLEOTIDE SEQUENCE [LARGE SCALE MRNA] OF 16-590 (ISOFORM 1)</scope>
    <source>
        <strain>C57BL/6J</strain>
        <tissue>Olfactory bulb</tissue>
    </source>
</reference>
<reference key="4">
    <citation type="journal article" date="2006" name="Mol. Cell. Proteomics">
        <title>Comprehensive identification of phosphorylation sites in postsynaptic density preparations.</title>
        <authorList>
            <person name="Trinidad J.C."/>
            <person name="Specht C.G."/>
            <person name="Thalhammer A."/>
            <person name="Schoepfer R."/>
            <person name="Burlingame A.L."/>
        </authorList>
    </citation>
    <scope>IDENTIFICATION BY MASS SPECTROMETRY [LARGE SCALE ANALYSIS]</scope>
    <source>
        <tissue>Brain</tissue>
    </source>
</reference>
<reference key="5">
    <citation type="journal article" date="2012" name="Neuron">
        <title>High-resolution proteomics unravel architecture and molecular diversity of native AMPA receptor complexes.</title>
        <authorList>
            <person name="Schwenk J."/>
            <person name="Harmel N."/>
            <person name="Brechet A."/>
            <person name="Zolles G."/>
            <person name="Berkefeld H."/>
            <person name="Muller C.S."/>
            <person name="Bildl W."/>
            <person name="Baehrens D."/>
            <person name="Huber B."/>
            <person name="Kulik A."/>
            <person name="Klocker N."/>
            <person name="Schulte U."/>
            <person name="Fakler B."/>
        </authorList>
    </citation>
    <scope>IDENTIFICATION IN AMPAR COMPLEX</scope>
    <scope>SUBCELLULAR LOCATION</scope>
    <scope>TISSUE SPECIFICITY</scope>
</reference>
<protein>
    <recommendedName>
        <fullName>Leucine-rich repeat transmembrane neuronal protein 4</fullName>
    </recommendedName>
</protein>
<evidence type="ECO:0000250" key="1"/>
<evidence type="ECO:0000255" key="2"/>
<evidence type="ECO:0000269" key="3">
    <source>
    </source>
</evidence>
<evidence type="ECO:0000269" key="4">
    <source>
    </source>
</evidence>
<evidence type="ECO:0000303" key="5">
    <source>
    </source>
</evidence>
<evidence type="ECO:0000305" key="6"/>
<gene>
    <name type="primary">Lrrtm4</name>
</gene>
<dbReference type="EMBL" id="AY182031">
    <property type="protein sequence ID" value="AAO67552.1"/>
    <property type="molecule type" value="mRNA"/>
</dbReference>
<dbReference type="EMBL" id="BC037216">
    <property type="protein sequence ID" value="AAH37216.1"/>
    <property type="molecule type" value="mRNA"/>
</dbReference>
<dbReference type="EMBL" id="AK032470">
    <property type="protein sequence ID" value="BAC27887.1"/>
    <property type="status" value="ALT_INIT"/>
    <property type="molecule type" value="mRNA"/>
</dbReference>
<dbReference type="CCDS" id="CCDS20259.2">
    <molecule id="Q80XG9-2"/>
</dbReference>
<dbReference type="CCDS" id="CCDS90065.1">
    <molecule id="Q80XG9-1"/>
</dbReference>
<dbReference type="RefSeq" id="NP_001128215.1">
    <property type="nucleotide sequence ID" value="NM_001134743.1"/>
</dbReference>
<dbReference type="RefSeq" id="NP_001334190.1">
    <molecule id="Q80XG9-1"/>
    <property type="nucleotide sequence ID" value="NM_001347261.1"/>
</dbReference>
<dbReference type="RefSeq" id="NP_848846.3">
    <molecule id="Q80XG9-2"/>
    <property type="nucleotide sequence ID" value="NM_178731.5"/>
</dbReference>
<dbReference type="RefSeq" id="XP_006506148.1">
    <molecule id="Q80XG9-1"/>
    <property type="nucleotide sequence ID" value="XM_006506085.3"/>
</dbReference>
<dbReference type="RefSeq" id="XP_006506149.1">
    <molecule id="Q80XG9-1"/>
    <property type="nucleotide sequence ID" value="XM_006506086.3"/>
</dbReference>
<dbReference type="RefSeq" id="XP_006506150.1">
    <molecule id="Q80XG9-1"/>
    <property type="nucleotide sequence ID" value="XM_006506087.2"/>
</dbReference>
<dbReference type="SMR" id="Q80XG9"/>
<dbReference type="BioGRID" id="232530">
    <property type="interactions" value="1"/>
</dbReference>
<dbReference type="FunCoup" id="Q80XG9">
    <property type="interactions" value="103"/>
</dbReference>
<dbReference type="STRING" id="10090.ENSMUSP00000117263"/>
<dbReference type="GlyCosmos" id="Q80XG9">
    <property type="glycosylation" value="3 sites, No reported glycans"/>
</dbReference>
<dbReference type="GlyGen" id="Q80XG9">
    <property type="glycosylation" value="5 sites, 2 N-linked glycans (2 sites), 1 O-linked glycan (2 sites)"/>
</dbReference>
<dbReference type="iPTMnet" id="Q80XG9"/>
<dbReference type="PhosphoSitePlus" id="Q80XG9"/>
<dbReference type="SwissPalm" id="Q80XG9"/>
<dbReference type="PaxDb" id="10090-ENSMUSP00000117263"/>
<dbReference type="ProteomicsDB" id="252531">
    <molecule id="Q80XG9-1"/>
</dbReference>
<dbReference type="ProteomicsDB" id="252532">
    <molecule id="Q80XG9-2"/>
</dbReference>
<dbReference type="ABCD" id="Q80XG9">
    <property type="antibodies" value="1 sequenced antibody"/>
</dbReference>
<dbReference type="Antibodypedia" id="47484">
    <property type="antibodies" value="116 antibodies from 30 providers"/>
</dbReference>
<dbReference type="Ensembl" id="ENSMUST00000074662.5">
    <molecule id="Q80XG9-2"/>
    <property type="protein sequence ID" value="ENSMUSP00000074232.5"/>
    <property type="gene ID" value="ENSMUSG00000052581.14"/>
</dbReference>
<dbReference type="Ensembl" id="ENSMUST00000126005.8">
    <molecule id="Q80XG9-2"/>
    <property type="protein sequence ID" value="ENSMUSP00000117445.2"/>
    <property type="gene ID" value="ENSMUSG00000052581.14"/>
</dbReference>
<dbReference type="Ensembl" id="ENSMUST00000126399.2">
    <molecule id="Q80XG9-1"/>
    <property type="protein sequence ID" value="ENSMUSP00000121124.2"/>
    <property type="gene ID" value="ENSMUSG00000052581.14"/>
</dbReference>
<dbReference type="Ensembl" id="ENSMUST00000133918.8">
    <molecule id="Q80XG9-1"/>
    <property type="protein sequence ID" value="ENSMUSP00000115016.2"/>
    <property type="gene ID" value="ENSMUSG00000052581.14"/>
</dbReference>
<dbReference type="GeneID" id="243499"/>
<dbReference type="KEGG" id="mmu:243499"/>
<dbReference type="UCSC" id="uc009ckf.2">
    <molecule id="Q80XG9-1"/>
    <property type="organism name" value="mouse"/>
</dbReference>
<dbReference type="UCSC" id="uc012enq.1">
    <molecule id="Q80XG9-2"/>
    <property type="organism name" value="mouse"/>
</dbReference>
<dbReference type="AGR" id="MGI:2389180"/>
<dbReference type="CTD" id="80059"/>
<dbReference type="MGI" id="MGI:2389180">
    <property type="gene designation" value="Lrrtm4"/>
</dbReference>
<dbReference type="VEuPathDB" id="HostDB:ENSMUSG00000052581"/>
<dbReference type="eggNOG" id="KOG0619">
    <property type="taxonomic scope" value="Eukaryota"/>
</dbReference>
<dbReference type="GeneTree" id="ENSGT00940000154909"/>
<dbReference type="HOGENOM" id="CLU_032965_0_0_1"/>
<dbReference type="InParanoid" id="Q80XG9"/>
<dbReference type="OrthoDB" id="10022853at2759"/>
<dbReference type="PhylomeDB" id="Q80XG9"/>
<dbReference type="TreeFam" id="TF332659"/>
<dbReference type="Reactome" id="R-MMU-6794361">
    <property type="pathway name" value="Neurexins and neuroligins"/>
</dbReference>
<dbReference type="BioGRID-ORCS" id="243499">
    <property type="hits" value="5 hits in 79 CRISPR screens"/>
</dbReference>
<dbReference type="CD-CODE" id="CE726F99">
    <property type="entry name" value="Postsynaptic density"/>
</dbReference>
<dbReference type="ChiTaRS" id="Lrrtm4">
    <property type="organism name" value="mouse"/>
</dbReference>
<dbReference type="PRO" id="PR:Q80XG9"/>
<dbReference type="Proteomes" id="UP000000589">
    <property type="component" value="Chromosome 6"/>
</dbReference>
<dbReference type="RNAct" id="Q80XG9">
    <property type="molecule type" value="protein"/>
</dbReference>
<dbReference type="Bgee" id="ENSMUSG00000052581">
    <property type="expression patterns" value="Expressed in lumbar subsegment of spinal cord and 117 other cell types or tissues"/>
</dbReference>
<dbReference type="ExpressionAtlas" id="Q80XG9">
    <property type="expression patterns" value="baseline and differential"/>
</dbReference>
<dbReference type="GO" id="GO:0032281">
    <property type="term" value="C:AMPA glutamate receptor complex"/>
    <property type="evidence" value="ECO:0000314"/>
    <property type="project" value="MGI"/>
</dbReference>
<dbReference type="GO" id="GO:0098982">
    <property type="term" value="C:GABA-ergic synapse"/>
    <property type="evidence" value="ECO:0000314"/>
    <property type="project" value="SynGO"/>
</dbReference>
<dbReference type="GO" id="GO:0098978">
    <property type="term" value="C:glutamatergic synapse"/>
    <property type="evidence" value="ECO:0000314"/>
    <property type="project" value="SynGO"/>
</dbReference>
<dbReference type="GO" id="GO:0016020">
    <property type="term" value="C:membrane"/>
    <property type="evidence" value="ECO:0000250"/>
    <property type="project" value="MGI"/>
</dbReference>
<dbReference type="GO" id="GO:0098684">
    <property type="term" value="C:photoreceptor ribbon synapse"/>
    <property type="evidence" value="ECO:0000314"/>
    <property type="project" value="SynGO"/>
</dbReference>
<dbReference type="GO" id="GO:0045211">
    <property type="term" value="C:postsynaptic membrane"/>
    <property type="evidence" value="ECO:0000314"/>
    <property type="project" value="MGI"/>
</dbReference>
<dbReference type="GO" id="GO:0045202">
    <property type="term" value="C:synapse"/>
    <property type="evidence" value="ECO:0000314"/>
    <property type="project" value="SynGO"/>
</dbReference>
<dbReference type="GO" id="GO:0043395">
    <property type="term" value="F:heparan sulfate proteoglycan binding"/>
    <property type="evidence" value="ECO:0000314"/>
    <property type="project" value="MGI"/>
</dbReference>
<dbReference type="GO" id="GO:0097113">
    <property type="term" value="P:AMPA glutamate receptor clustering"/>
    <property type="evidence" value="ECO:0000315"/>
    <property type="project" value="MGI"/>
</dbReference>
<dbReference type="GO" id="GO:0072578">
    <property type="term" value="P:neurotransmitter-gated ion channel clustering"/>
    <property type="evidence" value="ECO:0000314"/>
    <property type="project" value="MGI"/>
</dbReference>
<dbReference type="GO" id="GO:0051965">
    <property type="term" value="P:positive regulation of synapse assembly"/>
    <property type="evidence" value="ECO:0000314"/>
    <property type="project" value="MGI"/>
</dbReference>
<dbReference type="GO" id="GO:1901629">
    <property type="term" value="P:regulation of presynaptic membrane organization"/>
    <property type="evidence" value="ECO:0000314"/>
    <property type="project" value="MGI"/>
</dbReference>
<dbReference type="GO" id="GO:0051963">
    <property type="term" value="P:regulation of synapse assembly"/>
    <property type="evidence" value="ECO:0000314"/>
    <property type="project" value="SynGO"/>
</dbReference>
<dbReference type="GO" id="GO:0050808">
    <property type="term" value="P:synapse organization"/>
    <property type="evidence" value="ECO:0000266"/>
    <property type="project" value="MGI"/>
</dbReference>
<dbReference type="FunFam" id="3.80.10.10:FF:000005">
    <property type="entry name" value="leucine-rich repeat transmembrane neuronal protein 4"/>
    <property type="match status" value="1"/>
</dbReference>
<dbReference type="Gene3D" id="3.80.10.10">
    <property type="entry name" value="Ribonuclease Inhibitor"/>
    <property type="match status" value="1"/>
</dbReference>
<dbReference type="InterPro" id="IPR001611">
    <property type="entry name" value="Leu-rich_rpt"/>
</dbReference>
<dbReference type="InterPro" id="IPR003591">
    <property type="entry name" value="Leu-rich_rpt_typical-subtyp"/>
</dbReference>
<dbReference type="InterPro" id="IPR032675">
    <property type="entry name" value="LRR_dom_sf"/>
</dbReference>
<dbReference type="InterPro" id="IPR050541">
    <property type="entry name" value="LRR_TM_domain-containing"/>
</dbReference>
<dbReference type="PANTHER" id="PTHR24369">
    <property type="entry name" value="ANTIGEN BSP, PUTATIVE-RELATED"/>
    <property type="match status" value="1"/>
</dbReference>
<dbReference type="PANTHER" id="PTHR24369:SF209">
    <property type="entry name" value="LEUCINE-RICH REPEAT TRANSMEMBRANE NEURONAL 2"/>
    <property type="match status" value="1"/>
</dbReference>
<dbReference type="Pfam" id="PF13855">
    <property type="entry name" value="LRR_8"/>
    <property type="match status" value="3"/>
</dbReference>
<dbReference type="PRINTS" id="PR00019">
    <property type="entry name" value="LEURICHRPT"/>
</dbReference>
<dbReference type="SMART" id="SM00369">
    <property type="entry name" value="LRR_TYP"/>
    <property type="match status" value="9"/>
</dbReference>
<dbReference type="SUPFAM" id="SSF52058">
    <property type="entry name" value="L domain-like"/>
    <property type="match status" value="1"/>
</dbReference>
<dbReference type="PROSITE" id="PS51450">
    <property type="entry name" value="LRR"/>
    <property type="match status" value="9"/>
</dbReference>